<organism>
    <name type="scientific">Oryctolagus cuniculus</name>
    <name type="common">Rabbit</name>
    <dbReference type="NCBI Taxonomy" id="9986"/>
    <lineage>
        <taxon>Eukaryota</taxon>
        <taxon>Metazoa</taxon>
        <taxon>Chordata</taxon>
        <taxon>Craniata</taxon>
        <taxon>Vertebrata</taxon>
        <taxon>Euteleostomi</taxon>
        <taxon>Mammalia</taxon>
        <taxon>Eutheria</taxon>
        <taxon>Euarchontoglires</taxon>
        <taxon>Glires</taxon>
        <taxon>Lagomorpha</taxon>
        <taxon>Leporidae</taxon>
        <taxon>Oryctolagus</taxon>
    </lineage>
</organism>
<accession>P12345</accession>
<accession>G1SKL2</accession>
<reference key="1">
    <citation type="submission" date="2009-08" db="EMBL/GenBank/DDBJ databases">
        <title>Genome Sequence of Oryctolagus cuniculus (European rabbit).</title>
        <authorList>
            <consortium name="The Genome Sequencing Platform"/>
            <person name="Di Palma F."/>
            <person name="Heiman D."/>
            <person name="Young S."/>
            <person name="Gnerre S."/>
            <person name="Johnson J."/>
            <person name="Lander E.S."/>
            <person name="Lindblad-Toh K."/>
        </authorList>
    </citation>
    <scope>NUCLEOTIDE SEQUENCE [LARGE SCALE GENOMIC DNA]</scope>
    <source>
        <strain>Thorbecke</strain>
    </source>
</reference>
<reference key="2">
    <citation type="journal article" date="1985" name="J. Biochem.">
        <title>Aspartate aminotransferase isozymes from rabbit liver. Purification and properties.</title>
        <authorList>
            <person name="Kuramitsu S."/>
            <person name="Inoue K."/>
            <person name="Kondo K."/>
            <person name="Aki K."/>
            <person name="Kagamiyama H."/>
        </authorList>
    </citation>
    <scope>PROTEIN SEQUENCE OF 30-59</scope>
    <source>
        <tissue>Liver</tissue>
    </source>
</reference>
<keyword id="KW-0007">Acetylation</keyword>
<keyword id="KW-0032">Aminotransferase</keyword>
<keyword id="KW-1003">Cell membrane</keyword>
<keyword id="KW-0903">Direct protein sequencing</keyword>
<keyword id="KW-0445">Lipid transport</keyword>
<keyword id="KW-0472">Membrane</keyword>
<keyword id="KW-0488">Methylation</keyword>
<keyword id="KW-0496">Mitochondrion</keyword>
<keyword id="KW-0944">Nitration</keyword>
<keyword id="KW-0597">Phosphoprotein</keyword>
<keyword id="KW-0663">Pyridoxal phosphate</keyword>
<keyword id="KW-1185">Reference proteome</keyword>
<keyword id="KW-0808">Transferase</keyword>
<keyword id="KW-0809">Transit peptide</keyword>
<keyword id="KW-0813">Transport</keyword>
<name>AATM_RABIT</name>
<dbReference type="EC" id="2.6.1.1" evidence="3"/>
<dbReference type="EC" id="2.6.1.7" evidence="3"/>
<dbReference type="EMBL" id="AAGW02052878">
    <property type="status" value="NOT_ANNOTATED_CDS"/>
    <property type="molecule type" value="Genomic_DNA"/>
</dbReference>
<dbReference type="PIR" id="B27103">
    <property type="entry name" value="B27103"/>
</dbReference>
<dbReference type="RefSeq" id="XP_002711597.1">
    <property type="nucleotide sequence ID" value="XM_002711551.5"/>
</dbReference>
<dbReference type="SMR" id="P12345"/>
<dbReference type="FunCoup" id="P12345">
    <property type="interactions" value="1229"/>
</dbReference>
<dbReference type="STRING" id="9986.ENSOCUP00000047949"/>
<dbReference type="PaxDb" id="9986-ENSOCUP00000003357"/>
<dbReference type="GeneID" id="100348732"/>
<dbReference type="KEGG" id="ocu:100348732"/>
<dbReference type="CTD" id="2806"/>
<dbReference type="eggNOG" id="KOG1411">
    <property type="taxonomic scope" value="Eukaryota"/>
</dbReference>
<dbReference type="HOGENOM" id="CLU_032440_1_2_1"/>
<dbReference type="InParanoid" id="P12345"/>
<dbReference type="OMA" id="VGACTIV"/>
<dbReference type="OrthoDB" id="6752799at2759"/>
<dbReference type="TreeFam" id="TF300641"/>
<dbReference type="Proteomes" id="UP000001811">
    <property type="component" value="Unplaced"/>
</dbReference>
<dbReference type="GO" id="GO:0005759">
    <property type="term" value="C:mitochondrial matrix"/>
    <property type="evidence" value="ECO:0007669"/>
    <property type="project" value="UniProtKB-SubCell"/>
</dbReference>
<dbReference type="GO" id="GO:0005739">
    <property type="term" value="C:mitochondrion"/>
    <property type="evidence" value="ECO:0000250"/>
    <property type="project" value="UniProtKB"/>
</dbReference>
<dbReference type="GO" id="GO:0005886">
    <property type="term" value="C:plasma membrane"/>
    <property type="evidence" value="ECO:0007669"/>
    <property type="project" value="UniProtKB-SubCell"/>
</dbReference>
<dbReference type="GO" id="GO:0016212">
    <property type="term" value="F:kynurenine-oxoglutarate transaminase activity"/>
    <property type="evidence" value="ECO:0007669"/>
    <property type="project" value="UniProtKB-EC"/>
</dbReference>
<dbReference type="GO" id="GO:0004069">
    <property type="term" value="F:L-aspartate:2-oxoglutarate aminotransferase activity"/>
    <property type="evidence" value="ECO:0000250"/>
    <property type="project" value="UniProtKB"/>
</dbReference>
<dbReference type="GO" id="GO:0030170">
    <property type="term" value="F:pyridoxal phosphate binding"/>
    <property type="evidence" value="ECO:0007669"/>
    <property type="project" value="InterPro"/>
</dbReference>
<dbReference type="GO" id="GO:0006103">
    <property type="term" value="P:2-oxoglutarate metabolic process"/>
    <property type="evidence" value="ECO:0000250"/>
    <property type="project" value="UniProtKB"/>
</dbReference>
<dbReference type="GO" id="GO:0006533">
    <property type="term" value="P:aspartate catabolic process"/>
    <property type="evidence" value="ECO:0007669"/>
    <property type="project" value="TreeGrafter"/>
</dbReference>
<dbReference type="GO" id="GO:0006531">
    <property type="term" value="P:aspartate metabolic process"/>
    <property type="evidence" value="ECO:0000250"/>
    <property type="project" value="UniProtKB"/>
</dbReference>
<dbReference type="GO" id="GO:0006536">
    <property type="term" value="P:glutamate metabolic process"/>
    <property type="evidence" value="ECO:0000250"/>
    <property type="project" value="UniProtKB"/>
</dbReference>
<dbReference type="GO" id="GO:0006869">
    <property type="term" value="P:lipid transport"/>
    <property type="evidence" value="ECO:0007669"/>
    <property type="project" value="UniProtKB-KW"/>
</dbReference>
<dbReference type="GO" id="GO:0006457">
    <property type="term" value="P:protein folding"/>
    <property type="evidence" value="ECO:0000304"/>
    <property type="project" value="HGNC"/>
</dbReference>
<dbReference type="CDD" id="cd00609">
    <property type="entry name" value="AAT_like"/>
    <property type="match status" value="1"/>
</dbReference>
<dbReference type="FunFam" id="3.40.640.10:FF:000026">
    <property type="entry name" value="Aspartate aminotransferase"/>
    <property type="match status" value="1"/>
</dbReference>
<dbReference type="FunFam" id="3.90.1150.10:FF:000001">
    <property type="entry name" value="Aspartate aminotransferase"/>
    <property type="match status" value="1"/>
</dbReference>
<dbReference type="FunFam" id="3.90.1150.10:FF:000160">
    <property type="entry name" value="Similar to aspartate aminotransferase"/>
    <property type="match status" value="1"/>
</dbReference>
<dbReference type="Gene3D" id="3.90.1150.10">
    <property type="entry name" value="Aspartate Aminotransferase, domain 1"/>
    <property type="match status" value="1"/>
</dbReference>
<dbReference type="Gene3D" id="3.40.640.10">
    <property type="entry name" value="Type I PLP-dependent aspartate aminotransferase-like (Major domain)"/>
    <property type="match status" value="1"/>
</dbReference>
<dbReference type="InterPro" id="IPR004839">
    <property type="entry name" value="Aminotransferase_I/II_large"/>
</dbReference>
<dbReference type="InterPro" id="IPR000796">
    <property type="entry name" value="Asp_trans"/>
</dbReference>
<dbReference type="InterPro" id="IPR004838">
    <property type="entry name" value="NHTrfase_class1_PyrdxlP-BS"/>
</dbReference>
<dbReference type="InterPro" id="IPR015424">
    <property type="entry name" value="PyrdxlP-dep_Trfase"/>
</dbReference>
<dbReference type="InterPro" id="IPR015421">
    <property type="entry name" value="PyrdxlP-dep_Trfase_major"/>
</dbReference>
<dbReference type="InterPro" id="IPR015422">
    <property type="entry name" value="PyrdxlP-dep_Trfase_small"/>
</dbReference>
<dbReference type="NCBIfam" id="NF006719">
    <property type="entry name" value="PRK09257.1"/>
    <property type="match status" value="1"/>
</dbReference>
<dbReference type="PANTHER" id="PTHR11879">
    <property type="entry name" value="ASPARTATE AMINOTRANSFERASE"/>
    <property type="match status" value="1"/>
</dbReference>
<dbReference type="PANTHER" id="PTHR11879:SF22">
    <property type="entry name" value="ASPARTATE AMINOTRANSFERASE, MITOCHONDRIAL"/>
    <property type="match status" value="1"/>
</dbReference>
<dbReference type="Pfam" id="PF00155">
    <property type="entry name" value="Aminotran_1_2"/>
    <property type="match status" value="1"/>
</dbReference>
<dbReference type="PRINTS" id="PR00799">
    <property type="entry name" value="TRANSAMINASE"/>
</dbReference>
<dbReference type="SUPFAM" id="SSF53383">
    <property type="entry name" value="PLP-dependent transferases"/>
    <property type="match status" value="1"/>
</dbReference>
<dbReference type="PROSITE" id="PS00105">
    <property type="entry name" value="AA_TRANSFER_CLASS_1"/>
    <property type="match status" value="1"/>
</dbReference>
<proteinExistence type="evidence at protein level"/>
<comment type="function">
    <text evidence="2">Catalyzes the irreversible transamination of the L-tryptophan metabolite L-kynurenine to form kynurenic acid (KA). As a member of the malate-aspartate shuttle, it has a key role in the intracellular NAD(H) redox balance. Is important for metabolite exchange between mitochondria and cytosol, and for amino acid metabolism. Facilitates cellular uptake of long-chain free fatty acids.</text>
</comment>
<comment type="catalytic activity">
    <reaction evidence="3">
        <text>L-aspartate + 2-oxoglutarate = oxaloacetate + L-glutamate</text>
        <dbReference type="Rhea" id="RHEA:21824"/>
        <dbReference type="ChEBI" id="CHEBI:16452"/>
        <dbReference type="ChEBI" id="CHEBI:16810"/>
        <dbReference type="ChEBI" id="CHEBI:29985"/>
        <dbReference type="ChEBI" id="CHEBI:29991"/>
        <dbReference type="EC" id="2.6.1.1"/>
    </reaction>
</comment>
<comment type="catalytic activity">
    <reaction evidence="3">
        <text>L-kynurenine + 2-oxoglutarate = kynurenate + L-glutamate + H2O</text>
        <dbReference type="Rhea" id="RHEA:65560"/>
        <dbReference type="ChEBI" id="CHEBI:15377"/>
        <dbReference type="ChEBI" id="CHEBI:16810"/>
        <dbReference type="ChEBI" id="CHEBI:29985"/>
        <dbReference type="ChEBI" id="CHEBI:57959"/>
        <dbReference type="ChEBI" id="CHEBI:58454"/>
        <dbReference type="EC" id="2.6.1.7"/>
    </reaction>
</comment>
<comment type="cofactor">
    <cofactor evidence="1">
        <name>pyridoxal 5'-phosphate</name>
        <dbReference type="ChEBI" id="CHEBI:597326"/>
    </cofactor>
</comment>
<comment type="subunit">
    <text evidence="1">Homodimer.</text>
</comment>
<comment type="subcellular location">
    <subcellularLocation>
        <location evidence="1">Mitochondrion matrix</location>
    </subcellularLocation>
    <subcellularLocation>
        <location evidence="1">Cell membrane</location>
    </subcellularLocation>
</comment>
<comment type="miscellaneous">
    <text>In eukaryotes there are cytoplasmic, mitochondrial and chloroplastic isozymes.</text>
</comment>
<comment type="similarity">
    <text evidence="7">Belongs to the class-I pyridoxal-phosphate-dependent aminotransferase family.</text>
</comment>
<gene>
    <name type="primary">GOT2</name>
</gene>
<protein>
    <recommendedName>
        <fullName>Aspartate aminotransferase, mitochondrial</fullName>
        <shortName>mAspAT</shortName>
        <ecNumber evidence="3">2.6.1.1</ecNumber>
        <ecNumber evidence="3">2.6.1.7</ecNumber>
    </recommendedName>
    <alternativeName>
        <fullName>Fatty acid-binding protein</fullName>
        <shortName>FABP-1</shortName>
    </alternativeName>
    <alternativeName>
        <fullName>Glutamate oxaloacetate transaminase 2</fullName>
    </alternativeName>
    <alternativeName>
        <fullName>Kynurenine aminotransferase 4</fullName>
    </alternativeName>
    <alternativeName>
        <fullName>Kynurenine aminotransferase IV</fullName>
    </alternativeName>
    <alternativeName>
        <fullName>Kynurenine--oxoglutarate transaminase 4</fullName>
    </alternativeName>
    <alternativeName>
        <fullName>Kynurenine--oxoglutarate transaminase IV</fullName>
    </alternativeName>
    <alternativeName>
        <fullName>Plasma membrane-associated fatty acid-binding protein</fullName>
        <shortName>FABPpm</shortName>
    </alternativeName>
    <alternativeName>
        <fullName>Transaminase A</fullName>
    </alternativeName>
</protein>
<evidence type="ECO:0000250" key="1"/>
<evidence type="ECO:0000250" key="2">
    <source>
        <dbReference type="UniProtKB" id="P00505"/>
    </source>
</evidence>
<evidence type="ECO:0000250" key="3">
    <source>
        <dbReference type="UniProtKB" id="P00507"/>
    </source>
</evidence>
<evidence type="ECO:0000250" key="4">
    <source>
        <dbReference type="UniProtKB" id="P05202"/>
    </source>
</evidence>
<evidence type="ECO:0000250" key="5">
    <source>
        <dbReference type="UniProtKB" id="P12344"/>
    </source>
</evidence>
<evidence type="ECO:0000269" key="6">
    <source>
    </source>
</evidence>
<evidence type="ECO:0000305" key="7"/>
<feature type="transit peptide" description="Mitochondrion" evidence="6">
    <location>
        <begin position="1"/>
        <end position="29"/>
    </location>
</feature>
<feature type="chain" id="PRO_0000123886" description="Aspartate aminotransferase, mitochondrial">
    <location>
        <begin position="30"/>
        <end position="430"/>
    </location>
</feature>
<feature type="binding site" evidence="1">
    <location>
        <position position="65"/>
    </location>
    <ligand>
        <name>substrate</name>
    </ligand>
</feature>
<feature type="binding site" evidence="1">
    <location>
        <position position="162"/>
    </location>
    <ligand>
        <name>substrate</name>
    </ligand>
</feature>
<feature type="binding site" evidence="1">
    <location>
        <position position="215"/>
    </location>
    <ligand>
        <name>substrate</name>
    </ligand>
</feature>
<feature type="binding site" evidence="1">
    <location>
        <position position="407"/>
    </location>
    <ligand>
        <name>substrate</name>
    </ligand>
</feature>
<feature type="modified residue" description="Phosphothreonine" evidence="2">
    <location>
        <position position="48"/>
    </location>
</feature>
<feature type="modified residue" description="N6-acetyllysine" evidence="4">
    <location>
        <position position="59"/>
    </location>
</feature>
<feature type="modified residue" description="N6-acetyllysine; alternate" evidence="2">
    <location>
        <position position="73"/>
    </location>
</feature>
<feature type="modified residue" description="N6-succinyllysine; alternate" evidence="4">
    <location>
        <position position="73"/>
    </location>
</feature>
<feature type="modified residue" description="N6-acetyllysine" evidence="4">
    <location>
        <position position="82"/>
    </location>
</feature>
<feature type="modified residue" description="N6-acetyllysine; alternate" evidence="2">
    <location>
        <position position="90"/>
    </location>
</feature>
<feature type="modified residue" description="N6-succinyllysine; alternate" evidence="4">
    <location>
        <position position="90"/>
    </location>
</feature>
<feature type="modified residue" description="3'-nitrotyrosine; alternate" evidence="4">
    <location>
        <position position="96"/>
    </location>
</feature>
<feature type="modified residue" description="Phosphotyrosine; alternate" evidence="2">
    <location>
        <position position="96"/>
    </location>
</feature>
<feature type="modified residue" description="N6-acetyllysine; alternate" evidence="4">
    <location>
        <position position="122"/>
    </location>
</feature>
<feature type="modified residue" description="N6-succinyllysine; alternate" evidence="4">
    <location>
        <position position="122"/>
    </location>
</feature>
<feature type="modified residue" description="Phosphoserine" evidence="2">
    <location>
        <position position="143"/>
    </location>
</feature>
<feature type="modified residue" description="N6-acetyllysine; alternate" evidence="2">
    <location>
        <position position="159"/>
    </location>
</feature>
<feature type="modified residue" description="N6-succinyllysine; alternate" evidence="4">
    <location>
        <position position="159"/>
    </location>
</feature>
<feature type="modified residue" description="N6-acetyllysine; alternate" evidence="4">
    <location>
        <position position="185"/>
    </location>
</feature>
<feature type="modified residue" description="N6-succinyllysine; alternate" evidence="4">
    <location>
        <position position="185"/>
    </location>
</feature>
<feature type="modified residue" description="N6-succinyllysine" evidence="4">
    <location>
        <position position="227"/>
    </location>
</feature>
<feature type="modified residue" description="N6-acetyllysine" evidence="2">
    <location>
        <position position="234"/>
    </location>
</feature>
<feature type="modified residue" description="N6-(pyridoxal phosphate)lysine; alternate" evidence="1">
    <location>
        <position position="279"/>
    </location>
</feature>
<feature type="modified residue" description="N6-acetyllysine; alternate" evidence="4">
    <location>
        <position position="279"/>
    </location>
</feature>
<feature type="modified residue" description="N6-acetyllysine; alternate" evidence="2">
    <location>
        <position position="296"/>
    </location>
</feature>
<feature type="modified residue" description="N6-succinyllysine; alternate" evidence="4">
    <location>
        <position position="296"/>
    </location>
</feature>
<feature type="modified residue" description="N6-acetyllysine" evidence="4">
    <location>
        <position position="302"/>
    </location>
</feature>
<feature type="modified residue" description="N6-acetyllysine; alternate" evidence="4">
    <location>
        <position position="309"/>
    </location>
</feature>
<feature type="modified residue" description="N6-succinyllysine; alternate" evidence="5">
    <location>
        <position position="309"/>
    </location>
</feature>
<feature type="modified residue" description="Asymmetric dimethylarginine" evidence="4">
    <location>
        <position position="313"/>
    </location>
</feature>
<feature type="modified residue" description="N6-acetyllysine; alternate" evidence="4">
    <location>
        <position position="338"/>
    </location>
</feature>
<feature type="modified residue" description="N6-succinyllysine; alternate" evidence="4">
    <location>
        <position position="338"/>
    </location>
</feature>
<feature type="modified residue" description="N6-acetyllysine" evidence="4">
    <location>
        <position position="345"/>
    </location>
</feature>
<feature type="modified residue" description="N6-acetyllysine; alternate" evidence="4">
    <location>
        <position position="363"/>
    </location>
</feature>
<feature type="modified residue" description="N6-succinyllysine; alternate" evidence="4">
    <location>
        <position position="363"/>
    </location>
</feature>
<feature type="modified residue" description="N6-acetyllysine" evidence="4">
    <location>
        <position position="364"/>
    </location>
</feature>
<feature type="modified residue" description="N6-acetyllysine" evidence="4">
    <location>
        <position position="387"/>
    </location>
</feature>
<feature type="modified residue" description="N6-acetyllysine; alternate" evidence="2">
    <location>
        <position position="396"/>
    </location>
</feature>
<feature type="modified residue" description="N6-succinyllysine; alternate" evidence="4">
    <location>
        <position position="396"/>
    </location>
</feature>
<feature type="modified residue" description="N6-acetyllysine; alternate" evidence="2">
    <location>
        <position position="404"/>
    </location>
</feature>
<feature type="modified residue" description="N6-succinyllysine; alternate" evidence="4">
    <location>
        <position position="404"/>
    </location>
</feature>
<sequence>MALLHSARVLSGVASAFHPGLAAAASARASSWWAHVEMGPPDPILGVTEAYKRDTNSKKMNLGVGAYRDDNGKPYVLPSVRKAEAQIAAKGLDKEYLPIGGLAEFCRASAELALGENSEVVKSGRFVTVQTISGTGALRIGASFLQRFFKFSRDVFLPKPSWGNHTPIFRDAGMQLQSYRYYDPKTCGFDFTGALEDISKIPEQSVLLLHACAHNPTGVDPRPEQWKEIATVVKKRNLFAFFDMAYQGFASGDGDKDAWAVRHFIEQGINVCLCQSYAKNMGLYGERVGAFTVICKDADEAKRVESQLKILIRPMYSNPPIHGARIASTILTSPDLRKQWLQEVKGMADRIIGMRTQLVSNLKKEGSTHSWQHITDQIGMFCFTGLKPEQVERLTKEFSIYMTKDGRISVAGVTSGNVGYLAHAIHQVTK</sequence>